<accession>A8FJF9</accession>
<keyword id="KW-0963">Cytoplasm</keyword>
<keyword id="KW-0274">FAD</keyword>
<keyword id="KW-0285">Flavoprotein</keyword>
<keyword id="KW-0520">NAD</keyword>
<keyword id="KW-0819">tRNA processing</keyword>
<evidence type="ECO:0000255" key="1">
    <source>
        <dbReference type="HAMAP-Rule" id="MF_00129"/>
    </source>
</evidence>
<sequence length="628" mass="69727">MGYEAGNYDVIVVGAGHAGVEAALASARQGAKTLVLTINLDMVAFMPCNPSVGGPAKGIVVREIDALGGEMARNIDKTHIQMRMLNTGKGPAVRALRAQADKFQYQHEMKKTMENEPNLTMLQGMVDHLIVKDDECKGVVTQTGANYRAKSVVLTTGTFLKGRIILGDLSYSSGPNNQQPSIKLSDHLADLGFDLVRFKTGTPPRVNSHSIDYSKTEIQPGDDVPRAFSYETVEYITDQLPCWLTYTSLETHQIIDENLHRSPMYSGMIKGTGPRYCPSIEDKVVRFNDKPRHQIFLEPEGRNTQEVYVQGLSTSLPEDVQQRMLSTIPGLENVQMMRAGYAIEYDAIVPTQLWPTLETKKISGLYTAGQINGTSGYEEAAGQGIMAGINAGRKALGKEEVILSRSDAYIGVLIDDLVTKGTNEPYRLLTSRAEYRLLLRHDNADLRLTELGYHIGLISQERFQAFQQKKEAIEAEKKRLYSVIIKPTAETQEFIRSLGGSELKDGIRASDLMKRPEMNYESVVRLAPAETPLPSDVCEQVEIQIKYEGYIEKSLQQVEKLKKMENKKIPDRIDYDAIKGIATEAKQKLKEVRPLSVAQASRISGVNPADISILLVYLEQGRIAKIAE</sequence>
<dbReference type="EMBL" id="CP000813">
    <property type="protein sequence ID" value="ABV64376.1"/>
    <property type="molecule type" value="Genomic_DNA"/>
</dbReference>
<dbReference type="RefSeq" id="WP_012011920.1">
    <property type="nucleotide sequence ID" value="NC_009848.4"/>
</dbReference>
<dbReference type="SMR" id="A8FJF9"/>
<dbReference type="STRING" id="315750.BPUM_3732"/>
<dbReference type="GeneID" id="5623025"/>
<dbReference type="KEGG" id="bpu:BPUM_3732"/>
<dbReference type="eggNOG" id="COG0445">
    <property type="taxonomic scope" value="Bacteria"/>
</dbReference>
<dbReference type="HOGENOM" id="CLU_007831_2_2_9"/>
<dbReference type="OrthoDB" id="9815560at2"/>
<dbReference type="Proteomes" id="UP000001355">
    <property type="component" value="Chromosome"/>
</dbReference>
<dbReference type="GO" id="GO:0005829">
    <property type="term" value="C:cytosol"/>
    <property type="evidence" value="ECO:0007669"/>
    <property type="project" value="TreeGrafter"/>
</dbReference>
<dbReference type="GO" id="GO:0050660">
    <property type="term" value="F:flavin adenine dinucleotide binding"/>
    <property type="evidence" value="ECO:0007669"/>
    <property type="project" value="UniProtKB-UniRule"/>
</dbReference>
<dbReference type="GO" id="GO:0030488">
    <property type="term" value="P:tRNA methylation"/>
    <property type="evidence" value="ECO:0007669"/>
    <property type="project" value="TreeGrafter"/>
</dbReference>
<dbReference type="GO" id="GO:0002098">
    <property type="term" value="P:tRNA wobble uridine modification"/>
    <property type="evidence" value="ECO:0007669"/>
    <property type="project" value="InterPro"/>
</dbReference>
<dbReference type="FunFam" id="1.10.10.1800:FF:000001">
    <property type="entry name" value="tRNA uridine 5-carboxymethylaminomethyl modification enzyme MnmG"/>
    <property type="match status" value="1"/>
</dbReference>
<dbReference type="FunFam" id="1.10.150.570:FF:000001">
    <property type="entry name" value="tRNA uridine 5-carboxymethylaminomethyl modification enzyme MnmG"/>
    <property type="match status" value="1"/>
</dbReference>
<dbReference type="FunFam" id="3.50.50.60:FF:000002">
    <property type="entry name" value="tRNA uridine 5-carboxymethylaminomethyl modification enzyme MnmG"/>
    <property type="match status" value="1"/>
</dbReference>
<dbReference type="FunFam" id="3.50.50.60:FF:000063">
    <property type="entry name" value="tRNA uridine 5-carboxymethylaminomethyl modification enzyme MnmG"/>
    <property type="match status" value="1"/>
</dbReference>
<dbReference type="Gene3D" id="3.50.50.60">
    <property type="entry name" value="FAD/NAD(P)-binding domain"/>
    <property type="match status" value="2"/>
</dbReference>
<dbReference type="Gene3D" id="1.10.150.570">
    <property type="entry name" value="GidA associated domain, C-terminal subdomain"/>
    <property type="match status" value="1"/>
</dbReference>
<dbReference type="Gene3D" id="1.10.10.1800">
    <property type="entry name" value="tRNA uridine 5-carboxymethylaminomethyl modification enzyme MnmG/GidA"/>
    <property type="match status" value="1"/>
</dbReference>
<dbReference type="HAMAP" id="MF_00129">
    <property type="entry name" value="MnmG_GidA"/>
    <property type="match status" value="1"/>
</dbReference>
<dbReference type="InterPro" id="IPR036188">
    <property type="entry name" value="FAD/NAD-bd_sf"/>
</dbReference>
<dbReference type="InterPro" id="IPR049312">
    <property type="entry name" value="GIDA_C_N"/>
</dbReference>
<dbReference type="InterPro" id="IPR004416">
    <property type="entry name" value="MnmG"/>
</dbReference>
<dbReference type="InterPro" id="IPR002218">
    <property type="entry name" value="MnmG-rel"/>
</dbReference>
<dbReference type="InterPro" id="IPR020595">
    <property type="entry name" value="MnmG-rel_CS"/>
</dbReference>
<dbReference type="InterPro" id="IPR026904">
    <property type="entry name" value="MnmG_C"/>
</dbReference>
<dbReference type="InterPro" id="IPR047001">
    <property type="entry name" value="MnmG_C_subdom"/>
</dbReference>
<dbReference type="InterPro" id="IPR044920">
    <property type="entry name" value="MnmG_C_subdom_sf"/>
</dbReference>
<dbReference type="InterPro" id="IPR040131">
    <property type="entry name" value="MnmG_N"/>
</dbReference>
<dbReference type="NCBIfam" id="TIGR00136">
    <property type="entry name" value="mnmG_gidA"/>
    <property type="match status" value="1"/>
</dbReference>
<dbReference type="PANTHER" id="PTHR11806">
    <property type="entry name" value="GLUCOSE INHIBITED DIVISION PROTEIN A"/>
    <property type="match status" value="1"/>
</dbReference>
<dbReference type="PANTHER" id="PTHR11806:SF0">
    <property type="entry name" value="PROTEIN MTO1 HOMOLOG, MITOCHONDRIAL"/>
    <property type="match status" value="1"/>
</dbReference>
<dbReference type="Pfam" id="PF01134">
    <property type="entry name" value="GIDA"/>
    <property type="match status" value="1"/>
</dbReference>
<dbReference type="Pfam" id="PF21680">
    <property type="entry name" value="GIDA_C_1st"/>
    <property type="match status" value="1"/>
</dbReference>
<dbReference type="Pfam" id="PF13932">
    <property type="entry name" value="SAM_GIDA_C"/>
    <property type="match status" value="1"/>
</dbReference>
<dbReference type="SMART" id="SM01228">
    <property type="entry name" value="GIDA_assoc_3"/>
    <property type="match status" value="1"/>
</dbReference>
<dbReference type="SUPFAM" id="SSF51905">
    <property type="entry name" value="FAD/NAD(P)-binding domain"/>
    <property type="match status" value="1"/>
</dbReference>
<dbReference type="PROSITE" id="PS01280">
    <property type="entry name" value="GIDA_1"/>
    <property type="match status" value="1"/>
</dbReference>
<dbReference type="PROSITE" id="PS01281">
    <property type="entry name" value="GIDA_2"/>
    <property type="match status" value="1"/>
</dbReference>
<feature type="chain" id="PRO_1000057840" description="tRNA uridine 5-carboxymethylaminomethyl modification enzyme MnmG">
    <location>
        <begin position="1"/>
        <end position="628"/>
    </location>
</feature>
<feature type="binding site" evidence="1">
    <location>
        <begin position="14"/>
        <end position="19"/>
    </location>
    <ligand>
        <name>FAD</name>
        <dbReference type="ChEBI" id="CHEBI:57692"/>
    </ligand>
</feature>
<feature type="binding site" evidence="1">
    <location>
        <position position="126"/>
    </location>
    <ligand>
        <name>FAD</name>
        <dbReference type="ChEBI" id="CHEBI:57692"/>
    </ligand>
</feature>
<feature type="binding site" evidence="1">
    <location>
        <position position="181"/>
    </location>
    <ligand>
        <name>FAD</name>
        <dbReference type="ChEBI" id="CHEBI:57692"/>
    </ligand>
</feature>
<feature type="binding site" evidence="1">
    <location>
        <begin position="273"/>
        <end position="287"/>
    </location>
    <ligand>
        <name>NAD(+)</name>
        <dbReference type="ChEBI" id="CHEBI:57540"/>
    </ligand>
</feature>
<feature type="binding site" evidence="1">
    <location>
        <position position="370"/>
    </location>
    <ligand>
        <name>FAD</name>
        <dbReference type="ChEBI" id="CHEBI:57692"/>
    </ligand>
</feature>
<gene>
    <name evidence="1" type="primary">mnmG</name>
    <name evidence="1" type="synonym">gidA</name>
    <name type="ordered locus">BPUM_3732</name>
</gene>
<protein>
    <recommendedName>
        <fullName evidence="1">tRNA uridine 5-carboxymethylaminomethyl modification enzyme MnmG</fullName>
    </recommendedName>
    <alternativeName>
        <fullName evidence="1">Glucose-inhibited division protein A</fullName>
    </alternativeName>
</protein>
<reference key="1">
    <citation type="journal article" date="2007" name="PLoS ONE">
        <title>Paradoxical DNA repair and peroxide resistance gene conservation in Bacillus pumilus SAFR-032.</title>
        <authorList>
            <person name="Gioia J."/>
            <person name="Yerrapragada S."/>
            <person name="Qin X."/>
            <person name="Jiang H."/>
            <person name="Igboeli O.C."/>
            <person name="Muzny D."/>
            <person name="Dugan-Rocha S."/>
            <person name="Ding Y."/>
            <person name="Hawes A."/>
            <person name="Liu W."/>
            <person name="Perez L."/>
            <person name="Kovar C."/>
            <person name="Dinh H."/>
            <person name="Lee S."/>
            <person name="Nazareth L."/>
            <person name="Blyth P."/>
            <person name="Holder M."/>
            <person name="Buhay C."/>
            <person name="Tirumalai M.R."/>
            <person name="Liu Y."/>
            <person name="Dasgupta I."/>
            <person name="Bokhetache L."/>
            <person name="Fujita M."/>
            <person name="Karouia F."/>
            <person name="Eswara Moorthy P."/>
            <person name="Siefert J."/>
            <person name="Uzman A."/>
            <person name="Buzumbo P."/>
            <person name="Verma A."/>
            <person name="Zwiya H."/>
            <person name="McWilliams B.D."/>
            <person name="Olowu A."/>
            <person name="Clinkenbeard K.D."/>
            <person name="Newcombe D."/>
            <person name="Golebiewski L."/>
            <person name="Petrosino J.F."/>
            <person name="Nicholson W.L."/>
            <person name="Fox G.E."/>
            <person name="Venkateswaran K."/>
            <person name="Highlander S.K."/>
            <person name="Weinstock G.M."/>
        </authorList>
    </citation>
    <scope>NUCLEOTIDE SEQUENCE [LARGE SCALE GENOMIC DNA]</scope>
    <source>
        <strain>SAFR-032</strain>
    </source>
</reference>
<proteinExistence type="inferred from homology"/>
<organism>
    <name type="scientific">Bacillus pumilus (strain SAFR-032)</name>
    <dbReference type="NCBI Taxonomy" id="315750"/>
    <lineage>
        <taxon>Bacteria</taxon>
        <taxon>Bacillati</taxon>
        <taxon>Bacillota</taxon>
        <taxon>Bacilli</taxon>
        <taxon>Bacillales</taxon>
        <taxon>Bacillaceae</taxon>
        <taxon>Bacillus</taxon>
    </lineage>
</organism>
<name>MNMG_BACP2</name>
<comment type="function">
    <text evidence="1">NAD-binding protein involved in the addition of a carboxymethylaminomethyl (cmnm) group at the wobble position (U34) of certain tRNAs, forming tRNA-cmnm(5)s(2)U34.</text>
</comment>
<comment type="cofactor">
    <cofactor evidence="1">
        <name>FAD</name>
        <dbReference type="ChEBI" id="CHEBI:57692"/>
    </cofactor>
</comment>
<comment type="subunit">
    <text evidence="1">Homodimer. Heterotetramer of two MnmE and two MnmG subunits.</text>
</comment>
<comment type="subcellular location">
    <subcellularLocation>
        <location evidence="1">Cytoplasm</location>
    </subcellularLocation>
</comment>
<comment type="similarity">
    <text evidence="1">Belongs to the MnmG family.</text>
</comment>